<keyword id="KW-0249">Electron transport</keyword>
<keyword id="KW-0472">Membrane</keyword>
<keyword id="KW-0496">Mitochondrion</keyword>
<keyword id="KW-0999">Mitochondrion inner membrane</keyword>
<keyword id="KW-1185">Reference proteome</keyword>
<keyword id="KW-0679">Respiratory chain</keyword>
<keyword id="KW-0809">Transit peptide</keyword>
<keyword id="KW-0812">Transmembrane</keyword>
<keyword id="KW-1133">Transmembrane helix</keyword>
<keyword id="KW-0813">Transport</keyword>
<gene>
    <name type="primary">NDUFB5</name>
</gene>
<organism>
    <name type="scientific">Pan troglodytes</name>
    <name type="common">Chimpanzee</name>
    <dbReference type="NCBI Taxonomy" id="9598"/>
    <lineage>
        <taxon>Eukaryota</taxon>
        <taxon>Metazoa</taxon>
        <taxon>Chordata</taxon>
        <taxon>Craniata</taxon>
        <taxon>Vertebrata</taxon>
        <taxon>Euteleostomi</taxon>
        <taxon>Mammalia</taxon>
        <taxon>Eutheria</taxon>
        <taxon>Euarchontoglires</taxon>
        <taxon>Primates</taxon>
        <taxon>Haplorrhini</taxon>
        <taxon>Catarrhini</taxon>
        <taxon>Hominidae</taxon>
        <taxon>Pan</taxon>
    </lineage>
</organism>
<dbReference type="EMBL" id="DQ885696">
    <property type="protein sequence ID" value="ABH12205.1"/>
    <property type="molecule type" value="mRNA"/>
</dbReference>
<dbReference type="RefSeq" id="NP_001065274.1">
    <property type="nucleotide sequence ID" value="NM_001071806.1"/>
</dbReference>
<dbReference type="SMR" id="Q0MQD8"/>
<dbReference type="FunCoup" id="Q0MQD8">
    <property type="interactions" value="2190"/>
</dbReference>
<dbReference type="STRING" id="9598.ENSPTRP00000084075"/>
<dbReference type="PaxDb" id="9598-ENSPTRP00000026930"/>
<dbReference type="Ensembl" id="ENSPTRT00000080382.1">
    <property type="protein sequence ID" value="ENSPTRP00000084075.1"/>
    <property type="gene ID" value="ENSPTRG00000015649.6"/>
</dbReference>
<dbReference type="GeneID" id="471008"/>
<dbReference type="KEGG" id="ptr:471008"/>
<dbReference type="CTD" id="4711"/>
<dbReference type="VGNC" id="VGNC:7989">
    <property type="gene designation" value="NDUFB5"/>
</dbReference>
<dbReference type="eggNOG" id="KOG4632">
    <property type="taxonomic scope" value="Eukaryota"/>
</dbReference>
<dbReference type="GeneTree" id="ENSGT00390000009980"/>
<dbReference type="HOGENOM" id="CLU_100260_2_0_1"/>
<dbReference type="InParanoid" id="Q0MQD8"/>
<dbReference type="OMA" id="HHHMTIK"/>
<dbReference type="OrthoDB" id="15260at9604"/>
<dbReference type="TreeFam" id="TF313997"/>
<dbReference type="Proteomes" id="UP000002277">
    <property type="component" value="Chromosome 3"/>
</dbReference>
<dbReference type="Bgee" id="ENSPTRG00000015649">
    <property type="expression patterns" value="Expressed in skeletal muscle tissue and 21 other cell types or tissues"/>
</dbReference>
<dbReference type="GO" id="GO:0005743">
    <property type="term" value="C:mitochondrial inner membrane"/>
    <property type="evidence" value="ECO:0007669"/>
    <property type="project" value="UniProtKB-SubCell"/>
</dbReference>
<dbReference type="GO" id="GO:0005654">
    <property type="term" value="C:nucleoplasm"/>
    <property type="evidence" value="ECO:0007669"/>
    <property type="project" value="Ensembl"/>
</dbReference>
<dbReference type="GO" id="GO:0045271">
    <property type="term" value="C:respiratory chain complex I"/>
    <property type="evidence" value="ECO:0000250"/>
    <property type="project" value="UniProtKB"/>
</dbReference>
<dbReference type="InterPro" id="IPR019173">
    <property type="entry name" value="NADH_UbQ_OxRdtase_B5_su"/>
</dbReference>
<dbReference type="PANTHER" id="PTHR13178:SF0">
    <property type="entry name" value="NADH DEHYDROGENASE [UBIQUINONE] 1 BETA SUBCOMPLEX SUBUNIT 5, MITOCHONDRIAL"/>
    <property type="match status" value="1"/>
</dbReference>
<dbReference type="PANTHER" id="PTHR13178">
    <property type="entry name" value="NADH-UBIQUINONE OXIDOREDUCTASE SGDH SUBUNIT"/>
    <property type="match status" value="1"/>
</dbReference>
<dbReference type="Pfam" id="PF09781">
    <property type="entry name" value="NDUF_B5"/>
    <property type="match status" value="1"/>
</dbReference>
<evidence type="ECO:0000250" key="1"/>
<evidence type="ECO:0000250" key="2">
    <source>
        <dbReference type="UniProtKB" id="O43674"/>
    </source>
</evidence>
<evidence type="ECO:0000255" key="3"/>
<evidence type="ECO:0000305" key="4"/>
<proteinExistence type="evidence at transcript level"/>
<reference key="1">
    <citation type="journal article" date="2006" name="Gene">
        <title>Adaptive selection of mitochondrial complex I subunits during primate radiation.</title>
        <authorList>
            <person name="Mishmar D."/>
            <person name="Ruiz-Pesini E."/>
            <person name="Mondragon-Palomino M."/>
            <person name="Procaccio V."/>
            <person name="Gaut B."/>
            <person name="Wallace D.C."/>
        </authorList>
    </citation>
    <scope>NUCLEOTIDE SEQUENCE [MRNA]</scope>
</reference>
<name>NDUB5_PANTR</name>
<protein>
    <recommendedName>
        <fullName>NADH dehydrogenase [ubiquinone] 1 beta subcomplex subunit 5, mitochondrial</fullName>
    </recommendedName>
    <alternativeName>
        <fullName>Complex I-SGDH</fullName>
        <shortName>CI-SGDH</shortName>
    </alternativeName>
    <alternativeName>
        <fullName>NADH-ubiquinone oxidoreductase SGDH subunit</fullName>
    </alternativeName>
</protein>
<sequence>MAAMSLLRRVSVTAVAALSGRPLGTRLGFGGFLTRGFPKAAAPVRHSGDHGKRLFVIRPSRFYDRRFLKLLRFYIALTGIPVAIFITLVNVFIGQAELAEIPEGYVPEHWEYYKHPISRWIARNFYDSPEKIYERTMAVLQIEAEKAELRVKELEVRKLMHVRGDGPWYYYETIDKELIDHSPKATPDN</sequence>
<feature type="transit peptide" description="Mitochondrion" evidence="1">
    <location>
        <begin position="1"/>
        <end position="46"/>
    </location>
</feature>
<feature type="chain" id="PRO_0000251834" description="NADH dehydrogenase [ubiquinone] 1 beta subcomplex subunit 5, mitochondrial">
    <location>
        <begin position="47"/>
        <end position="189"/>
    </location>
</feature>
<feature type="transmembrane region" description="Helical" evidence="3">
    <location>
        <begin position="73"/>
        <end position="93"/>
    </location>
</feature>
<accession>Q0MQD8</accession>
<comment type="function">
    <text evidence="2">Accessory subunit of the mitochondrial membrane respiratory chain NADH dehydrogenase (Complex I), that is believed not to be involved in catalysis. Complex I functions in the transfer of electrons from NADH to the respiratory chain. The immediate electron acceptor for the enzyme is believed to be ubiquinone.</text>
</comment>
<comment type="subunit">
    <text evidence="2">Complex I is composed of 45 different subunits.</text>
</comment>
<comment type="subcellular location">
    <subcellularLocation>
        <location evidence="2">Mitochondrion inner membrane</location>
        <topology evidence="2">Single-pass membrane protein</topology>
        <orientation evidence="2">Matrix side</orientation>
    </subcellularLocation>
</comment>
<comment type="similarity">
    <text evidence="4">Belongs to the complex I NDUFB5 subunit family.</text>
</comment>